<proteinExistence type="inferred from homology"/>
<protein>
    <recommendedName>
        <fullName evidence="2">Small ribosomal subunit protein uS4c</fullName>
    </recommendedName>
    <alternativeName>
        <fullName>Plastid 30S ribosomal protein S4</fullName>
    </alternativeName>
</protein>
<gene>
    <name type="primary">rps4</name>
</gene>
<name>RR4_CUSEX</name>
<comment type="function">
    <text evidence="1">One of the primary rRNA binding proteins, it binds directly to 16S rRNA where it nucleates assembly of the body of the 30S subunit.</text>
</comment>
<comment type="function">
    <text evidence="1">With S5 and S12 plays an important role in translational accuracy.</text>
</comment>
<comment type="subunit">
    <text evidence="1">Part of the 30S ribosomal subunit. Contacts protein S5. The interaction surface between S4 and S5 is involved in control of translational fidelity (By similarity).</text>
</comment>
<comment type="subcellular location">
    <subcellularLocation>
        <location>Plastid</location>
    </subcellularLocation>
</comment>
<comment type="similarity">
    <text evidence="2">Belongs to the universal ribosomal protein uS4 family.</text>
</comment>
<reference key="1">
    <citation type="journal article" date="2007" name="BMC Plant Biol.">
        <title>Complete plastid genome sequences suggest strong selection for retention of photosynthetic genes in the parasitic plant genus Cuscuta.</title>
        <authorList>
            <person name="McNeal J.R."/>
            <person name="Kuehl J.V."/>
            <person name="Boore J.L."/>
            <person name="dePamphilis C.W."/>
        </authorList>
    </citation>
    <scope>NUCLEOTIDE SEQUENCE [LARGE SCALE GENOMIC DNA]</scope>
</reference>
<evidence type="ECO:0000250" key="1"/>
<evidence type="ECO:0000305" key="2"/>
<feature type="chain" id="PRO_0000322365" description="Small ribosomal subunit protein uS4c">
    <location>
        <begin position="1"/>
        <end position="201"/>
    </location>
</feature>
<feature type="domain" description="S4 RNA-binding">
    <location>
        <begin position="89"/>
        <end position="149"/>
    </location>
</feature>
<accession>A8W3C6</accession>
<organism>
    <name type="scientific">Cuscuta exaltata</name>
    <name type="common">Tall dodder</name>
    <dbReference type="NCBI Taxonomy" id="476139"/>
    <lineage>
        <taxon>Eukaryota</taxon>
        <taxon>Viridiplantae</taxon>
        <taxon>Streptophyta</taxon>
        <taxon>Embryophyta</taxon>
        <taxon>Tracheophyta</taxon>
        <taxon>Spermatophyta</taxon>
        <taxon>Magnoliopsida</taxon>
        <taxon>eudicotyledons</taxon>
        <taxon>Gunneridae</taxon>
        <taxon>Pentapetalae</taxon>
        <taxon>asterids</taxon>
        <taxon>lamiids</taxon>
        <taxon>Solanales</taxon>
        <taxon>Convolvulaceae</taxon>
        <taxon>Cuscuteae</taxon>
        <taxon>Cuscuta</taxon>
        <taxon>Cuscuta subgen. Monogynella</taxon>
    </lineage>
</organism>
<sequence length="201" mass="23446">MSRYRGPRFKKIRRLGALPGLTNKRPRTVRDLRNQSRSGKKSQYRIRLEEKQKLRFHYGLTERQLINYVRIARKAKGSTGEILIQLLEMRLDNILFRLGMASTIPAARQLVNHRHIFVNGHIVDIPSYRCKPRDIITSKDKPKSGALIKNSIEAFPREELPNHLTLHPAPYKGLINQIIDTKWVGLKINELLVVEYYSRQT</sequence>
<keyword id="KW-0934">Plastid</keyword>
<keyword id="KW-0687">Ribonucleoprotein</keyword>
<keyword id="KW-0689">Ribosomal protein</keyword>
<keyword id="KW-0694">RNA-binding</keyword>
<keyword id="KW-0699">rRNA-binding</keyword>
<geneLocation type="plastid"/>
<dbReference type="EMBL" id="EU189132">
    <property type="protein sequence ID" value="ABW83697.1"/>
    <property type="molecule type" value="Genomic_DNA"/>
</dbReference>
<dbReference type="RefSeq" id="YP_001542533.1">
    <property type="nucleotide sequence ID" value="NC_009963.1"/>
</dbReference>
<dbReference type="SMR" id="A8W3C6"/>
<dbReference type="GeneID" id="5729669"/>
<dbReference type="GO" id="GO:0009536">
    <property type="term" value="C:plastid"/>
    <property type="evidence" value="ECO:0007669"/>
    <property type="project" value="UniProtKB-SubCell"/>
</dbReference>
<dbReference type="GO" id="GO:0015935">
    <property type="term" value="C:small ribosomal subunit"/>
    <property type="evidence" value="ECO:0007669"/>
    <property type="project" value="InterPro"/>
</dbReference>
<dbReference type="GO" id="GO:0019843">
    <property type="term" value="F:rRNA binding"/>
    <property type="evidence" value="ECO:0007669"/>
    <property type="project" value="UniProtKB-KW"/>
</dbReference>
<dbReference type="GO" id="GO:0003735">
    <property type="term" value="F:structural constituent of ribosome"/>
    <property type="evidence" value="ECO:0007669"/>
    <property type="project" value="InterPro"/>
</dbReference>
<dbReference type="GO" id="GO:0042274">
    <property type="term" value="P:ribosomal small subunit biogenesis"/>
    <property type="evidence" value="ECO:0007669"/>
    <property type="project" value="TreeGrafter"/>
</dbReference>
<dbReference type="GO" id="GO:0006412">
    <property type="term" value="P:translation"/>
    <property type="evidence" value="ECO:0007669"/>
    <property type="project" value="InterPro"/>
</dbReference>
<dbReference type="CDD" id="cd00165">
    <property type="entry name" value="S4"/>
    <property type="match status" value="1"/>
</dbReference>
<dbReference type="FunFam" id="1.10.1050.10:FF:000002">
    <property type="entry name" value="30S ribosomal protein S4, chloroplastic"/>
    <property type="match status" value="1"/>
</dbReference>
<dbReference type="FunFam" id="3.10.290.10:FF:000081">
    <property type="entry name" value="30S ribosomal protein S4, chloroplastic"/>
    <property type="match status" value="1"/>
</dbReference>
<dbReference type="Gene3D" id="1.10.1050.10">
    <property type="entry name" value="Ribosomal Protein S4 Delta 41, Chain A, domain 1"/>
    <property type="match status" value="1"/>
</dbReference>
<dbReference type="Gene3D" id="3.10.290.10">
    <property type="entry name" value="RNA-binding S4 domain"/>
    <property type="match status" value="1"/>
</dbReference>
<dbReference type="HAMAP" id="MF_01306_B">
    <property type="entry name" value="Ribosomal_uS4_B"/>
    <property type="match status" value="1"/>
</dbReference>
<dbReference type="InterPro" id="IPR022801">
    <property type="entry name" value="Ribosomal_uS4"/>
</dbReference>
<dbReference type="InterPro" id="IPR005709">
    <property type="entry name" value="Ribosomal_uS4_bac-type"/>
</dbReference>
<dbReference type="InterPro" id="IPR018079">
    <property type="entry name" value="Ribosomal_uS4_CS"/>
</dbReference>
<dbReference type="InterPro" id="IPR001912">
    <property type="entry name" value="Ribosomal_uS4_N"/>
</dbReference>
<dbReference type="InterPro" id="IPR002942">
    <property type="entry name" value="S4_RNA-bd"/>
</dbReference>
<dbReference type="InterPro" id="IPR036986">
    <property type="entry name" value="S4_RNA-bd_sf"/>
</dbReference>
<dbReference type="NCBIfam" id="NF003717">
    <property type="entry name" value="PRK05327.1"/>
    <property type="match status" value="1"/>
</dbReference>
<dbReference type="NCBIfam" id="TIGR01017">
    <property type="entry name" value="rpsD_bact"/>
    <property type="match status" value="1"/>
</dbReference>
<dbReference type="PANTHER" id="PTHR11831">
    <property type="entry name" value="30S 40S RIBOSOMAL PROTEIN"/>
    <property type="match status" value="1"/>
</dbReference>
<dbReference type="PANTHER" id="PTHR11831:SF4">
    <property type="entry name" value="SMALL RIBOSOMAL SUBUNIT PROTEIN US4M"/>
    <property type="match status" value="1"/>
</dbReference>
<dbReference type="Pfam" id="PF00163">
    <property type="entry name" value="Ribosomal_S4"/>
    <property type="match status" value="1"/>
</dbReference>
<dbReference type="Pfam" id="PF01479">
    <property type="entry name" value="S4"/>
    <property type="match status" value="1"/>
</dbReference>
<dbReference type="SMART" id="SM01390">
    <property type="entry name" value="Ribosomal_S4"/>
    <property type="match status" value="1"/>
</dbReference>
<dbReference type="SMART" id="SM00363">
    <property type="entry name" value="S4"/>
    <property type="match status" value="1"/>
</dbReference>
<dbReference type="SUPFAM" id="SSF55174">
    <property type="entry name" value="Alpha-L RNA-binding motif"/>
    <property type="match status" value="1"/>
</dbReference>
<dbReference type="PROSITE" id="PS00632">
    <property type="entry name" value="RIBOSOMAL_S4"/>
    <property type="match status" value="1"/>
</dbReference>
<dbReference type="PROSITE" id="PS50889">
    <property type="entry name" value="S4"/>
    <property type="match status" value="1"/>
</dbReference>